<feature type="initiator methionine" description="Removed" evidence="2">
    <location>
        <position position="1"/>
    </location>
</feature>
<feature type="chain" id="PRO_0000050136" description="Far upstream element-binding protein 1">
    <location>
        <begin position="2"/>
        <end position="651"/>
    </location>
</feature>
<feature type="domain" description="KH 1" evidence="3">
    <location>
        <begin position="96"/>
        <end position="160"/>
    </location>
</feature>
<feature type="domain" description="KH 2" evidence="3">
    <location>
        <begin position="181"/>
        <end position="247"/>
    </location>
</feature>
<feature type="domain" description="KH 3" evidence="3">
    <location>
        <begin position="271"/>
        <end position="335"/>
    </location>
</feature>
<feature type="domain" description="KH 4" evidence="3">
    <location>
        <begin position="372"/>
        <end position="439"/>
    </location>
</feature>
<feature type="region of interest" description="Disordered" evidence="4">
    <location>
        <begin position="1"/>
        <end position="24"/>
    </location>
</feature>
<feature type="region of interest" description="Disordered" evidence="4">
    <location>
        <begin position="40"/>
        <end position="92"/>
    </location>
</feature>
<feature type="region of interest" description="Disordered" evidence="4">
    <location>
        <begin position="443"/>
        <end position="528"/>
    </location>
</feature>
<feature type="region of interest" description="Disordered" evidence="4">
    <location>
        <begin position="545"/>
        <end position="574"/>
    </location>
</feature>
<feature type="region of interest" description="Disordered" evidence="4">
    <location>
        <begin position="625"/>
        <end position="651"/>
    </location>
</feature>
<feature type="compositionally biased region" description="Basic and acidic residues" evidence="4">
    <location>
        <begin position="61"/>
        <end position="73"/>
    </location>
</feature>
<feature type="compositionally biased region" description="Pro residues" evidence="4">
    <location>
        <begin position="464"/>
        <end position="501"/>
    </location>
</feature>
<feature type="compositionally biased region" description="Low complexity" evidence="4">
    <location>
        <begin position="514"/>
        <end position="528"/>
    </location>
</feature>
<feature type="compositionally biased region" description="Low complexity" evidence="4">
    <location>
        <begin position="552"/>
        <end position="574"/>
    </location>
</feature>
<feature type="modified residue" description="N-acetylalanine" evidence="2">
    <location>
        <position position="2"/>
    </location>
</feature>
<feature type="modified residue" description="Phosphoserine" evidence="2">
    <location>
        <position position="48"/>
    </location>
</feature>
<feature type="modified residue" description="Phosphoserine" evidence="2">
    <location>
        <position position="51"/>
    </location>
</feature>
<feature type="modified residue" description="Phosphoserine" evidence="2">
    <location>
        <position position="136"/>
    </location>
</feature>
<feature type="modified residue" description="Phosphothreonine" evidence="7">
    <location>
        <position position="149"/>
    </location>
</feature>
<feature type="modified residue" description="Omega-N-methylarginine" evidence="8">
    <location>
        <position position="317"/>
    </location>
</feature>
<feature type="modified residue" description="Omega-N-methylarginine" evidence="8">
    <location>
        <position position="355"/>
    </location>
</feature>
<feature type="modified residue" description="Omega-N-methylarginine" evidence="8">
    <location>
        <position position="357"/>
    </location>
</feature>
<feature type="modified residue" description="Omega-N-methylarginine" evidence="8">
    <location>
        <position position="359"/>
    </location>
</feature>
<feature type="modified residue" description="Phosphoserine" evidence="7">
    <location>
        <position position="411"/>
    </location>
</feature>
<feature type="modified residue" description="Phosphothreonine" evidence="2">
    <location>
        <position position="428"/>
    </location>
</feature>
<feature type="modified residue" description="Phosphoserine" evidence="2">
    <location>
        <position position="626"/>
    </location>
</feature>
<feature type="splice variant" id="VSP_008322" description="In isoform 2." evidence="5">
    <original>D</original>
    <variation>DGSWTNPSSTTHWEGMPSPFKD</variation>
    <location>
        <position position="67"/>
    </location>
</feature>
<feature type="sequence conflict" description="In Ref. 2; BAC26457." evidence="6" ref="2">
    <location>
        <position position="93"/>
    </location>
</feature>
<feature type="strand" evidence="10">
    <location>
        <begin position="97"/>
        <end position="104"/>
    </location>
</feature>
<feature type="helix" evidence="10">
    <location>
        <begin position="105"/>
        <end position="112"/>
    </location>
</feature>
<feature type="strand" evidence="10">
    <location>
        <begin position="114"/>
        <end position="116"/>
    </location>
</feature>
<feature type="helix" evidence="10">
    <location>
        <begin position="117"/>
        <end position="125"/>
    </location>
</feature>
<feature type="strand" evidence="10">
    <location>
        <begin position="129"/>
        <end position="132"/>
    </location>
</feature>
<feature type="strand" evidence="10">
    <location>
        <begin position="140"/>
        <end position="148"/>
    </location>
</feature>
<feature type="helix" evidence="10">
    <location>
        <begin position="150"/>
        <end position="166"/>
    </location>
</feature>
<feature type="strand" evidence="9">
    <location>
        <begin position="182"/>
        <end position="188"/>
    </location>
</feature>
<feature type="helix" evidence="9">
    <location>
        <begin position="190"/>
        <end position="196"/>
    </location>
</feature>
<feature type="strand" evidence="9">
    <location>
        <begin position="199"/>
        <end position="202"/>
    </location>
</feature>
<feature type="helix" evidence="9">
    <location>
        <begin position="203"/>
        <end position="211"/>
    </location>
</feature>
<feature type="strand" evidence="9">
    <location>
        <begin position="213"/>
        <end position="217"/>
    </location>
</feature>
<feature type="strand" evidence="9">
    <location>
        <begin position="229"/>
        <end position="235"/>
    </location>
</feature>
<feature type="turn" evidence="9">
    <location>
        <begin position="237"/>
        <end position="239"/>
    </location>
</feature>
<feature type="helix" evidence="9">
    <location>
        <begin position="240"/>
        <end position="251"/>
    </location>
</feature>
<gene>
    <name type="primary">Fubp1</name>
    <name type="synonym">D3Ertd330e</name>
</gene>
<proteinExistence type="evidence at protein level"/>
<protein>
    <recommendedName>
        <fullName>Far upstream element-binding protein 1</fullName>
        <shortName>FBP</shortName>
        <shortName>FUSE-binding protein 1</shortName>
    </recommendedName>
</protein>
<evidence type="ECO:0000250" key="1"/>
<evidence type="ECO:0000250" key="2">
    <source>
        <dbReference type="UniProtKB" id="Q96AE4"/>
    </source>
</evidence>
<evidence type="ECO:0000255" key="3">
    <source>
        <dbReference type="PROSITE-ProRule" id="PRU00117"/>
    </source>
</evidence>
<evidence type="ECO:0000256" key="4">
    <source>
        <dbReference type="SAM" id="MobiDB-lite"/>
    </source>
</evidence>
<evidence type="ECO:0000303" key="5">
    <source>
    </source>
</evidence>
<evidence type="ECO:0000305" key="6"/>
<evidence type="ECO:0007744" key="7">
    <source>
    </source>
</evidence>
<evidence type="ECO:0007744" key="8">
    <source>
    </source>
</evidence>
<evidence type="ECO:0007829" key="9">
    <source>
        <dbReference type="PDB" id="1X4M"/>
    </source>
</evidence>
<evidence type="ECO:0007829" key="10">
    <source>
        <dbReference type="PDB" id="1X4N"/>
    </source>
</evidence>
<comment type="function">
    <text evidence="1">Regulates MYC expression by binding to a single-stranded far-upstream element (FUSE) upstream of the MYC promoter. May act both as activator and repressor of transcription (By similarity).</text>
</comment>
<comment type="subunit">
    <text evidence="1">Found in a complex with PUF60 and far upstream element (FUSE) DNA segment. Interacts with PUF60 and JTV1 (By similarity).</text>
</comment>
<comment type="subcellular location">
    <subcellularLocation>
        <location evidence="6">Nucleus</location>
    </subcellularLocation>
</comment>
<comment type="alternative products">
    <event type="alternative splicing"/>
    <isoform>
        <id>Q91WJ8-1</id>
        <name>1</name>
        <sequence type="displayed"/>
    </isoform>
    <isoform>
        <id>Q91WJ8-2</id>
        <name>2</name>
        <sequence type="described" ref="VSP_008322"/>
    </isoform>
</comment>
<comment type="PTM">
    <text evidence="1">Ubiquitinated. This targets the protein for proteasome-mediated degradation (By similarity).</text>
</comment>
<name>FUBP1_MOUSE</name>
<accession>Q91WJ8</accession>
<accession>Q8C0Y8</accession>
<keyword id="KW-0002">3D-structure</keyword>
<keyword id="KW-0007">Acetylation</keyword>
<keyword id="KW-0025">Alternative splicing</keyword>
<keyword id="KW-0903">Direct protein sequencing</keyword>
<keyword id="KW-0238">DNA-binding</keyword>
<keyword id="KW-0488">Methylation</keyword>
<keyword id="KW-0539">Nucleus</keyword>
<keyword id="KW-0597">Phosphoprotein</keyword>
<keyword id="KW-1185">Reference proteome</keyword>
<keyword id="KW-0677">Repeat</keyword>
<keyword id="KW-0804">Transcription</keyword>
<keyword id="KW-0805">Transcription regulation</keyword>
<keyword id="KW-0832">Ubl conjugation</keyword>
<dbReference type="EMBL" id="BC014763">
    <property type="protein sequence ID" value="AAH14763.1"/>
    <property type="molecule type" value="mRNA"/>
</dbReference>
<dbReference type="EMBL" id="AK029458">
    <property type="protein sequence ID" value="BAC26457.1"/>
    <property type="molecule type" value="mRNA"/>
</dbReference>
<dbReference type="CCDS" id="CCDS89707.1">
    <molecule id="Q91WJ8-1"/>
</dbReference>
<dbReference type="RefSeq" id="NP_001342300.1">
    <molecule id="Q91WJ8-1"/>
    <property type="nucleotide sequence ID" value="NM_001355371.2"/>
</dbReference>
<dbReference type="RefSeq" id="XP_006501734.1">
    <property type="nucleotide sequence ID" value="XM_006501671.1"/>
</dbReference>
<dbReference type="RefSeq" id="XP_030108533.1">
    <molecule id="Q91WJ8-2"/>
    <property type="nucleotide sequence ID" value="XM_030252673.1"/>
</dbReference>
<dbReference type="PDB" id="1X4M">
    <property type="method" value="NMR"/>
    <property type="chains" value="A=175-255"/>
</dbReference>
<dbReference type="PDB" id="1X4N">
    <property type="method" value="NMR"/>
    <property type="chains" value="A=91-168"/>
</dbReference>
<dbReference type="PDBsum" id="1X4M"/>
<dbReference type="PDBsum" id="1X4N"/>
<dbReference type="SMR" id="Q91WJ8"/>
<dbReference type="BioGRID" id="206245">
    <property type="interactions" value="15"/>
</dbReference>
<dbReference type="FunCoup" id="Q91WJ8">
    <property type="interactions" value="5312"/>
</dbReference>
<dbReference type="IntAct" id="Q91WJ8">
    <property type="interactions" value="2"/>
</dbReference>
<dbReference type="STRING" id="10090.ENSMUSP00000130145"/>
<dbReference type="GlyGen" id="Q91WJ8">
    <property type="glycosylation" value="1 site, 1 O-linked glycan (1 site)"/>
</dbReference>
<dbReference type="iPTMnet" id="Q91WJ8"/>
<dbReference type="PhosphoSitePlus" id="Q91WJ8"/>
<dbReference type="SwissPalm" id="Q91WJ8"/>
<dbReference type="REPRODUCTION-2DPAGE" id="Q91WJ8"/>
<dbReference type="jPOST" id="Q91WJ8"/>
<dbReference type="PaxDb" id="10090-ENSMUSP00000130145"/>
<dbReference type="PeptideAtlas" id="Q91WJ8"/>
<dbReference type="ProteomicsDB" id="266883">
    <molecule id="Q91WJ8-1"/>
</dbReference>
<dbReference type="ProteomicsDB" id="266884">
    <molecule id="Q91WJ8-2"/>
</dbReference>
<dbReference type="Pumba" id="Q91WJ8"/>
<dbReference type="Antibodypedia" id="1310">
    <property type="antibodies" value="328 antibodies from 34 providers"/>
</dbReference>
<dbReference type="Ensembl" id="ENSMUST00000196739.5">
    <molecule id="Q91WJ8-1"/>
    <property type="protein sequence ID" value="ENSMUSP00000143101.2"/>
    <property type="gene ID" value="ENSMUSG00000028034.16"/>
</dbReference>
<dbReference type="GeneID" id="51886"/>
<dbReference type="UCSC" id="uc008rsv.1">
    <molecule id="Q91WJ8-1"/>
    <property type="organism name" value="mouse"/>
</dbReference>
<dbReference type="AGR" id="MGI:1196294"/>
<dbReference type="MGI" id="MGI:1196294">
    <property type="gene designation" value="Fubp1"/>
</dbReference>
<dbReference type="VEuPathDB" id="HostDB:ENSMUSG00000028034"/>
<dbReference type="eggNOG" id="KOG1676">
    <property type="taxonomic scope" value="Eukaryota"/>
</dbReference>
<dbReference type="GeneTree" id="ENSGT00940000160043"/>
<dbReference type="InParanoid" id="Q91WJ8"/>
<dbReference type="PhylomeDB" id="Q91WJ8"/>
<dbReference type="BioGRID-ORCS" id="51886">
    <property type="hits" value="5 hits in 80 CRISPR screens"/>
</dbReference>
<dbReference type="ChiTaRS" id="Fubp1">
    <property type="organism name" value="mouse"/>
</dbReference>
<dbReference type="EvolutionaryTrace" id="Q91WJ8"/>
<dbReference type="PRO" id="PR:Q91WJ8"/>
<dbReference type="Proteomes" id="UP000000589">
    <property type="component" value="Chromosome 3"/>
</dbReference>
<dbReference type="RNAct" id="Q91WJ8">
    <property type="molecule type" value="protein"/>
</dbReference>
<dbReference type="Bgee" id="ENSMUSG00000028034">
    <property type="expression patterns" value="Expressed in undifferentiated genital tubercle and 269 other cell types or tissues"/>
</dbReference>
<dbReference type="ExpressionAtlas" id="Q91WJ8">
    <property type="expression patterns" value="baseline and differential"/>
</dbReference>
<dbReference type="GO" id="GO:0005634">
    <property type="term" value="C:nucleus"/>
    <property type="evidence" value="ECO:0007669"/>
    <property type="project" value="UniProtKB-SubCell"/>
</dbReference>
<dbReference type="GO" id="GO:0045202">
    <property type="term" value="C:synapse"/>
    <property type="evidence" value="ECO:0000314"/>
    <property type="project" value="SynGO"/>
</dbReference>
<dbReference type="GO" id="GO:0003723">
    <property type="term" value="F:RNA binding"/>
    <property type="evidence" value="ECO:0007669"/>
    <property type="project" value="InterPro"/>
</dbReference>
<dbReference type="GO" id="GO:0000978">
    <property type="term" value="F:RNA polymerase II cis-regulatory region sequence-specific DNA binding"/>
    <property type="evidence" value="ECO:0000314"/>
    <property type="project" value="MGI"/>
</dbReference>
<dbReference type="GO" id="GO:0071425">
    <property type="term" value="P:hematopoietic stem cell proliferation"/>
    <property type="evidence" value="ECO:0000315"/>
    <property type="project" value="MGI"/>
</dbReference>
<dbReference type="GO" id="GO:0006357">
    <property type="term" value="P:regulation of transcription by RNA polymerase II"/>
    <property type="evidence" value="ECO:0000315"/>
    <property type="project" value="MGI"/>
</dbReference>
<dbReference type="GO" id="GO:0048103">
    <property type="term" value="P:somatic stem cell division"/>
    <property type="evidence" value="ECO:0000315"/>
    <property type="project" value="MGI"/>
</dbReference>
<dbReference type="CDD" id="cd22478">
    <property type="entry name" value="KH-I_FUBP1_rpt1"/>
    <property type="match status" value="1"/>
</dbReference>
<dbReference type="CDD" id="cd22481">
    <property type="entry name" value="KH-I_FUBP1_rpt2"/>
    <property type="match status" value="1"/>
</dbReference>
<dbReference type="CDD" id="cd22484">
    <property type="entry name" value="KH-I_FUBP1_rpt3"/>
    <property type="match status" value="1"/>
</dbReference>
<dbReference type="CDD" id="cd22487">
    <property type="entry name" value="KH-I_FUBP1_rpt4"/>
    <property type="match status" value="1"/>
</dbReference>
<dbReference type="FunFam" id="3.30.1370.10:FF:000015">
    <property type="entry name" value="Far upstream element-binding protein 1 isoform X1"/>
    <property type="match status" value="1"/>
</dbReference>
<dbReference type="FunFam" id="3.30.1370.10:FF:000007">
    <property type="entry name" value="far upstream element-binding protein 1 isoform X1"/>
    <property type="match status" value="1"/>
</dbReference>
<dbReference type="FunFam" id="3.30.1370.10:FF:000008">
    <property type="entry name" value="far upstream element-binding protein 1 isoform X1"/>
    <property type="match status" value="1"/>
</dbReference>
<dbReference type="FunFam" id="3.30.1370.10:FF:000010">
    <property type="entry name" value="far upstream element-binding protein 1 isoform X1"/>
    <property type="match status" value="1"/>
</dbReference>
<dbReference type="Gene3D" id="3.30.1370.10">
    <property type="entry name" value="K Homology domain, type 1"/>
    <property type="match status" value="4"/>
</dbReference>
<dbReference type="InterPro" id="IPR015096">
    <property type="entry name" value="FUBP_C"/>
</dbReference>
<dbReference type="InterPro" id="IPR048249">
    <property type="entry name" value="KH-I_FUBP1_dom1"/>
</dbReference>
<dbReference type="InterPro" id="IPR048250">
    <property type="entry name" value="KH-I_FUBP1_dom2"/>
</dbReference>
<dbReference type="InterPro" id="IPR048251">
    <property type="entry name" value="KH-I_FUBP1_dom3"/>
</dbReference>
<dbReference type="InterPro" id="IPR048252">
    <property type="entry name" value="KH-I_FUBP1_dom4"/>
</dbReference>
<dbReference type="InterPro" id="IPR004087">
    <property type="entry name" value="KH_dom"/>
</dbReference>
<dbReference type="InterPro" id="IPR004088">
    <property type="entry name" value="KH_dom_type_1"/>
</dbReference>
<dbReference type="InterPro" id="IPR036612">
    <property type="entry name" value="KH_dom_type_1_sf"/>
</dbReference>
<dbReference type="PANTHER" id="PTHR10288">
    <property type="entry name" value="KH DOMAIN CONTAINING RNA BINDING PROTEIN"/>
    <property type="match status" value="1"/>
</dbReference>
<dbReference type="Pfam" id="PF09005">
    <property type="entry name" value="FUBP_C"/>
    <property type="match status" value="2"/>
</dbReference>
<dbReference type="Pfam" id="PF00013">
    <property type="entry name" value="KH_1"/>
    <property type="match status" value="4"/>
</dbReference>
<dbReference type="SMART" id="SM00322">
    <property type="entry name" value="KH"/>
    <property type="match status" value="4"/>
</dbReference>
<dbReference type="SUPFAM" id="SSF54791">
    <property type="entry name" value="Eukaryotic type KH-domain (KH-domain type I)"/>
    <property type="match status" value="4"/>
</dbReference>
<dbReference type="PROSITE" id="PS50084">
    <property type="entry name" value="KH_TYPE_1"/>
    <property type="match status" value="4"/>
</dbReference>
<organism>
    <name type="scientific">Mus musculus</name>
    <name type="common">Mouse</name>
    <dbReference type="NCBI Taxonomy" id="10090"/>
    <lineage>
        <taxon>Eukaryota</taxon>
        <taxon>Metazoa</taxon>
        <taxon>Chordata</taxon>
        <taxon>Craniata</taxon>
        <taxon>Vertebrata</taxon>
        <taxon>Euteleostomi</taxon>
        <taxon>Mammalia</taxon>
        <taxon>Eutheria</taxon>
        <taxon>Euarchontoglires</taxon>
        <taxon>Glires</taxon>
        <taxon>Rodentia</taxon>
        <taxon>Myomorpha</taxon>
        <taxon>Muroidea</taxon>
        <taxon>Muridae</taxon>
        <taxon>Murinae</taxon>
        <taxon>Mus</taxon>
        <taxon>Mus</taxon>
    </lineage>
</organism>
<sequence>MADYSTVPPPSSGSAGGGGGGVVNDAFKDALQRARQIAAKIGGDAGTSLNSNDYGYGGQKRPLEDGDQPDAKKVPPQNDSFGAQLPPMHQQQSRSVMTEEYKVPDGMVGFIIGRGGEQISRIQQESGCKIQIAPDSGGLPERSCMLTGTPESVQSAKRLLDQIVEKGRPAPGFHHGDGPGNAVQEIMIPASKAGLVIGKGGETIKQLQERAGVKMVMIQDGPQNTGADKPLRITGDPYKVQQAKEMVLELIRDQGGFREVRNEYGSRIGGNEGIDVPIPRFAVGIVIGRNGEMIKKIQNDAGVRIQFKPDDGTTPDRIAQITGPPDRCQHAAEIITDLLRSVQAGNPGGPGPGGRGRGRGQGNWNMGPPGGLQEFNFIVPTGKTGLIIGKGGETIKSISQQSGARIELQRSPPPNADPNMKLFTIRGTPQQIDYARQLIEEKIGGPVNPLGPPVPHGPHGVPGPHGPPGPPGPGTPMGPYNPAPYNPGPPGPAPHGPPAPYAPQGWGNAYPHWQQQAPPDPAKAGADPNSAAWAAYYAHYYQQQAQPPPAAPAGAPATTQTNGQGDQQAPAPAGQVDYTKAWEEYYKKMGQAVPAPAGAPPGGQPDYSAAWAEYYRQQAAYYAQTSPQGMPQHPPAPQGFANHARSHHHLY</sequence>
<reference key="1">
    <citation type="journal article" date="2004" name="Genome Res.">
        <title>The status, quality, and expansion of the NIH full-length cDNA project: the Mammalian Gene Collection (MGC).</title>
        <authorList>
            <consortium name="The MGC Project Team"/>
        </authorList>
    </citation>
    <scope>NUCLEOTIDE SEQUENCE [LARGE SCALE MRNA] (ISOFORM 1)</scope>
    <source>
        <tissue>Retina</tissue>
    </source>
</reference>
<reference key="2">
    <citation type="journal article" date="2005" name="Science">
        <title>The transcriptional landscape of the mammalian genome.</title>
        <authorList>
            <person name="Carninci P."/>
            <person name="Kasukawa T."/>
            <person name="Katayama S."/>
            <person name="Gough J."/>
            <person name="Frith M.C."/>
            <person name="Maeda N."/>
            <person name="Oyama R."/>
            <person name="Ravasi T."/>
            <person name="Lenhard B."/>
            <person name="Wells C."/>
            <person name="Kodzius R."/>
            <person name="Shimokawa K."/>
            <person name="Bajic V.B."/>
            <person name="Brenner S.E."/>
            <person name="Batalov S."/>
            <person name="Forrest A.R."/>
            <person name="Zavolan M."/>
            <person name="Davis M.J."/>
            <person name="Wilming L.G."/>
            <person name="Aidinis V."/>
            <person name="Allen J.E."/>
            <person name="Ambesi-Impiombato A."/>
            <person name="Apweiler R."/>
            <person name="Aturaliya R.N."/>
            <person name="Bailey T.L."/>
            <person name="Bansal M."/>
            <person name="Baxter L."/>
            <person name="Beisel K.W."/>
            <person name="Bersano T."/>
            <person name="Bono H."/>
            <person name="Chalk A.M."/>
            <person name="Chiu K.P."/>
            <person name="Choudhary V."/>
            <person name="Christoffels A."/>
            <person name="Clutterbuck D.R."/>
            <person name="Crowe M.L."/>
            <person name="Dalla E."/>
            <person name="Dalrymple B.P."/>
            <person name="de Bono B."/>
            <person name="Della Gatta G."/>
            <person name="di Bernardo D."/>
            <person name="Down T."/>
            <person name="Engstrom P."/>
            <person name="Fagiolini M."/>
            <person name="Faulkner G."/>
            <person name="Fletcher C.F."/>
            <person name="Fukushima T."/>
            <person name="Furuno M."/>
            <person name="Futaki S."/>
            <person name="Gariboldi M."/>
            <person name="Georgii-Hemming P."/>
            <person name="Gingeras T.R."/>
            <person name="Gojobori T."/>
            <person name="Green R.E."/>
            <person name="Gustincich S."/>
            <person name="Harbers M."/>
            <person name="Hayashi Y."/>
            <person name="Hensch T.K."/>
            <person name="Hirokawa N."/>
            <person name="Hill D."/>
            <person name="Huminiecki L."/>
            <person name="Iacono M."/>
            <person name="Ikeo K."/>
            <person name="Iwama A."/>
            <person name="Ishikawa T."/>
            <person name="Jakt M."/>
            <person name="Kanapin A."/>
            <person name="Katoh M."/>
            <person name="Kawasawa Y."/>
            <person name="Kelso J."/>
            <person name="Kitamura H."/>
            <person name="Kitano H."/>
            <person name="Kollias G."/>
            <person name="Krishnan S.P."/>
            <person name="Kruger A."/>
            <person name="Kummerfeld S.K."/>
            <person name="Kurochkin I.V."/>
            <person name="Lareau L.F."/>
            <person name="Lazarevic D."/>
            <person name="Lipovich L."/>
            <person name="Liu J."/>
            <person name="Liuni S."/>
            <person name="McWilliam S."/>
            <person name="Madan Babu M."/>
            <person name="Madera M."/>
            <person name="Marchionni L."/>
            <person name="Matsuda H."/>
            <person name="Matsuzawa S."/>
            <person name="Miki H."/>
            <person name="Mignone F."/>
            <person name="Miyake S."/>
            <person name="Morris K."/>
            <person name="Mottagui-Tabar S."/>
            <person name="Mulder N."/>
            <person name="Nakano N."/>
            <person name="Nakauchi H."/>
            <person name="Ng P."/>
            <person name="Nilsson R."/>
            <person name="Nishiguchi S."/>
            <person name="Nishikawa S."/>
            <person name="Nori F."/>
            <person name="Ohara O."/>
            <person name="Okazaki Y."/>
            <person name="Orlando V."/>
            <person name="Pang K.C."/>
            <person name="Pavan W.J."/>
            <person name="Pavesi G."/>
            <person name="Pesole G."/>
            <person name="Petrovsky N."/>
            <person name="Piazza S."/>
            <person name="Reed J."/>
            <person name="Reid J.F."/>
            <person name="Ring B.Z."/>
            <person name="Ringwald M."/>
            <person name="Rost B."/>
            <person name="Ruan Y."/>
            <person name="Salzberg S.L."/>
            <person name="Sandelin A."/>
            <person name="Schneider C."/>
            <person name="Schoenbach C."/>
            <person name="Sekiguchi K."/>
            <person name="Semple C.A."/>
            <person name="Seno S."/>
            <person name="Sessa L."/>
            <person name="Sheng Y."/>
            <person name="Shibata Y."/>
            <person name="Shimada H."/>
            <person name="Shimada K."/>
            <person name="Silva D."/>
            <person name="Sinclair B."/>
            <person name="Sperling S."/>
            <person name="Stupka E."/>
            <person name="Sugiura K."/>
            <person name="Sultana R."/>
            <person name="Takenaka Y."/>
            <person name="Taki K."/>
            <person name="Tammoja K."/>
            <person name="Tan S.L."/>
            <person name="Tang S."/>
            <person name="Taylor M.S."/>
            <person name="Tegner J."/>
            <person name="Teichmann S.A."/>
            <person name="Ueda H.R."/>
            <person name="van Nimwegen E."/>
            <person name="Verardo R."/>
            <person name="Wei C.L."/>
            <person name="Yagi K."/>
            <person name="Yamanishi H."/>
            <person name="Zabarovsky E."/>
            <person name="Zhu S."/>
            <person name="Zimmer A."/>
            <person name="Hide W."/>
            <person name="Bult C."/>
            <person name="Grimmond S.M."/>
            <person name="Teasdale R.D."/>
            <person name="Liu E.T."/>
            <person name="Brusic V."/>
            <person name="Quackenbush J."/>
            <person name="Wahlestedt C."/>
            <person name="Mattick J.S."/>
            <person name="Hume D.A."/>
            <person name="Kai C."/>
            <person name="Sasaki D."/>
            <person name="Tomaru Y."/>
            <person name="Fukuda S."/>
            <person name="Kanamori-Katayama M."/>
            <person name="Suzuki M."/>
            <person name="Aoki J."/>
            <person name="Arakawa T."/>
            <person name="Iida J."/>
            <person name="Imamura K."/>
            <person name="Itoh M."/>
            <person name="Kato T."/>
            <person name="Kawaji H."/>
            <person name="Kawagashira N."/>
            <person name="Kawashima T."/>
            <person name="Kojima M."/>
            <person name="Kondo S."/>
            <person name="Konno H."/>
            <person name="Nakano K."/>
            <person name="Ninomiya N."/>
            <person name="Nishio T."/>
            <person name="Okada M."/>
            <person name="Plessy C."/>
            <person name="Shibata K."/>
            <person name="Shiraki T."/>
            <person name="Suzuki S."/>
            <person name="Tagami M."/>
            <person name="Waki K."/>
            <person name="Watahiki A."/>
            <person name="Okamura-Oho Y."/>
            <person name="Suzuki H."/>
            <person name="Kawai J."/>
            <person name="Hayashizaki Y."/>
        </authorList>
    </citation>
    <scope>NUCLEOTIDE SEQUENCE [LARGE SCALE MRNA] OF 1-286 (ISOFORM 2)</scope>
    <source>
        <strain>C57BL/6J</strain>
        <tissue>Head</tissue>
    </source>
</reference>
<reference key="3">
    <citation type="submission" date="2007-07" db="UniProtKB">
        <authorList>
            <person name="Lubec G."/>
            <person name="Yang J.W."/>
            <person name="Zigmond M."/>
        </authorList>
    </citation>
    <scope>PROTEIN SEQUENCE OF 103-114</scope>
    <source>
        <tissue>Brain</tissue>
    </source>
</reference>
<reference key="4">
    <citation type="journal article" date="2010" name="Cell">
        <title>A tissue-specific atlas of mouse protein phosphorylation and expression.</title>
        <authorList>
            <person name="Huttlin E.L."/>
            <person name="Jedrychowski M.P."/>
            <person name="Elias J.E."/>
            <person name="Goswami T."/>
            <person name="Rad R."/>
            <person name="Beausoleil S.A."/>
            <person name="Villen J."/>
            <person name="Haas W."/>
            <person name="Sowa M.E."/>
            <person name="Gygi S.P."/>
        </authorList>
    </citation>
    <scope>PHOSPHORYLATION [LARGE SCALE ANALYSIS] AT THR-149 AND SER-411</scope>
    <scope>IDENTIFICATION BY MASS SPECTROMETRY [LARGE SCALE ANALYSIS]</scope>
    <source>
        <tissue>Brain</tissue>
        <tissue>Brown adipose tissue</tissue>
        <tissue>Heart</tissue>
        <tissue>Kidney</tissue>
        <tissue>Liver</tissue>
        <tissue>Lung</tissue>
        <tissue>Pancreas</tissue>
        <tissue>Spleen</tissue>
        <tissue>Testis</tissue>
    </source>
</reference>
<reference key="5">
    <citation type="journal article" date="2014" name="Mol. Cell. Proteomics">
        <title>Immunoaffinity enrichment and mass spectrometry analysis of protein methylation.</title>
        <authorList>
            <person name="Guo A."/>
            <person name="Gu H."/>
            <person name="Zhou J."/>
            <person name="Mulhern D."/>
            <person name="Wang Y."/>
            <person name="Lee K.A."/>
            <person name="Yang V."/>
            <person name="Aguiar M."/>
            <person name="Kornhauser J."/>
            <person name="Jia X."/>
            <person name="Ren J."/>
            <person name="Beausoleil S.A."/>
            <person name="Silva J.C."/>
            <person name="Vemulapalli V."/>
            <person name="Bedford M.T."/>
            <person name="Comb M.J."/>
        </authorList>
    </citation>
    <scope>METHYLATION [LARGE SCALE ANALYSIS] AT ARG-317; ARG-355; ARG-357 AND ARG-359</scope>
    <scope>IDENTIFICATION BY MASS SPECTROMETRY [LARGE SCALE ANALYSIS]</scope>
    <source>
        <tissue>Brain</tissue>
        <tissue>Embryo</tissue>
    </source>
</reference>
<reference key="6">
    <citation type="submission" date="2005-11" db="PDB data bank">
        <title>Solution structure of KH domains in FUSE binding protein 1.</title>
        <authorList>
            <consortium name="RIKEN structural genomics initiative (RSGI)"/>
        </authorList>
    </citation>
    <scope>STRUCTURE BY NMR OF 91-255</scope>
</reference>